<keyword id="KW-0067">ATP-binding</keyword>
<keyword id="KW-0227">DNA damage</keyword>
<keyword id="KW-0234">DNA repair</keyword>
<keyword id="KW-0238">DNA-binding</keyword>
<keyword id="KW-0269">Exonuclease</keyword>
<keyword id="KW-0347">Helicase</keyword>
<keyword id="KW-0378">Hydrolase</keyword>
<keyword id="KW-0413">Isomerase</keyword>
<keyword id="KW-0540">Nuclease</keyword>
<keyword id="KW-0547">Nucleotide-binding</keyword>
<accession>A7FPG0</accession>
<sequence>MSGTKWTDEQRQAIFTKDCNLLVAAGAGAGKTAVLVQRIIEKILDKGEPIDIDKLLVVTFTNAAAAEMRERIGDAISKGLDEDPESKVLRKQLTLLNKSNIMTIHSFCLQVIKNNFHTMEIDPNFRICDETEGILMKQEAIDELFDELYEIENEDFINLVESYASRKDTRLQEVVLELHRFAKSAPFSYDWLLNMAEEFNVGEEFNFEETPWADMIMEDMKVLLHGFKNMLQQSIDVILNSEGIDYYYEPFKMDLSFINSLLEKSSFKEFRGEIIAYDFPKLPLKRNKDADKEAKERVKKLRDKVKKKIVELKNILDSYENEFIKKEFIFLYPSMKALSNLVILFDKKYEAKKRERDLIDFNDIEHLCLSILTDKNSEGHIIPSDIALDYRKKFAEVLIDEYQDSNLVQEVIMSMVSRVKGYWSFYNGQLMFNEEEINLEEPQICLDIPNRFMVGDVKQSIYRFRQAKPEIFLDKYNEYSEEEGTKNRKVKLFKNFRSRKEVINGVNYLFKQIMSKTIGELDYTEEEALKVGASYGEEVKGEPIELCLMDKKYEISEEVLKEYNVDEEEALDNIQLEGRLVAKKIQKLVGNNLEGGLKVFDKKLGEYRNLQYRDIVILMRATSNWAPIFVEELAKEGIPVFADTNSGYFDTAEIKTMISLLQIIDNPLQDIPLLSVLRSPIASFTDDELIDIRMVNKNITFYECMEIIYRLYKNEKLDSYYSFYIEDENKINKIIKDMNEKLKNKICSFIEKLKLWREKSIHIDIDEFIWFLYVETGYYGYAGALQAGEQRQANLRILFQRAKQYAKTSYKGLFNFINFINKLKFSSGDMGSAKILGENENVVRIMSIHKSKGLEFPVVILSGTGKNFNMTDLNKNILFHRDLGYGPDYVDTERRIAYPSLVKNIIKNKIRLETLSEEMRILYVALTRAREKLIITGLINNMDKTVEDWLNLSEDKNKVPEYAVMSGKTYLDWIGPALIKHKDAVSFREELKMTSELSNIVDDKSKWKIELWNKRELLKEKVEEDEVEISEKIKETLMNLEESNYKEEIYKRLSFKYKYDNASSIPTKLSVSDVKKQFILDEKENTEELFKKLELRKPMFMEEKKKISPSERGTIIHLFMQHLDLKKAENEEDIKEQINRLIEREFITYEQSKVISPYKILKFCRGELGKRILNSNNVNKEMPFSIEIPALEIYKELDKEIYKDEKLIIQGVIDCYFEEEDGLVLLDYKTDYVNDIEEIKNRYEIQIKYYEEALNRITGKNVKDKYLYLFSVDNYIKID</sequence>
<organism>
    <name type="scientific">Clostridium botulinum (strain ATCC 19397 / Type A)</name>
    <dbReference type="NCBI Taxonomy" id="441770"/>
    <lineage>
        <taxon>Bacteria</taxon>
        <taxon>Bacillati</taxon>
        <taxon>Bacillota</taxon>
        <taxon>Clostridia</taxon>
        <taxon>Eubacteriales</taxon>
        <taxon>Clostridiaceae</taxon>
        <taxon>Clostridium</taxon>
    </lineage>
</organism>
<feature type="chain" id="PRO_0000379250" description="ATP-dependent helicase/nuclease subunit A">
    <location>
        <begin position="1"/>
        <end position="1279"/>
    </location>
</feature>
<feature type="domain" description="UvrD-like helicase ATP-binding" evidence="1">
    <location>
        <begin position="4"/>
        <end position="499"/>
    </location>
</feature>
<feature type="domain" description="UvrD-like helicase C-terminal" evidence="1">
    <location>
        <begin position="526"/>
        <end position="853"/>
    </location>
</feature>
<feature type="binding site" evidence="1">
    <location>
        <begin position="25"/>
        <end position="32"/>
    </location>
    <ligand>
        <name>ATP</name>
        <dbReference type="ChEBI" id="CHEBI:30616"/>
    </ligand>
</feature>
<gene>
    <name evidence="1" type="primary">addA</name>
    <name type="ordered locus">CLB_0478</name>
</gene>
<dbReference type="EC" id="3.1.-.-" evidence="1"/>
<dbReference type="EC" id="5.6.2.4" evidence="1"/>
<dbReference type="EMBL" id="CP000726">
    <property type="protein sequence ID" value="ABS32402.1"/>
    <property type="molecule type" value="Genomic_DNA"/>
</dbReference>
<dbReference type="RefSeq" id="WP_011986133.1">
    <property type="nucleotide sequence ID" value="NC_009697.1"/>
</dbReference>
<dbReference type="SMR" id="A7FPG0"/>
<dbReference type="KEGG" id="cba:CLB_0478"/>
<dbReference type="HOGENOM" id="CLU_001114_3_1_9"/>
<dbReference type="GO" id="GO:0005829">
    <property type="term" value="C:cytosol"/>
    <property type="evidence" value="ECO:0007669"/>
    <property type="project" value="TreeGrafter"/>
</dbReference>
<dbReference type="GO" id="GO:0033202">
    <property type="term" value="C:DNA helicase complex"/>
    <property type="evidence" value="ECO:0007669"/>
    <property type="project" value="TreeGrafter"/>
</dbReference>
<dbReference type="GO" id="GO:0043138">
    <property type="term" value="F:3'-5' DNA helicase activity"/>
    <property type="evidence" value="ECO:0007669"/>
    <property type="project" value="UniProtKB-UniRule"/>
</dbReference>
<dbReference type="GO" id="GO:0008408">
    <property type="term" value="F:3'-5' exonuclease activity"/>
    <property type="evidence" value="ECO:0007669"/>
    <property type="project" value="UniProtKB-UniRule"/>
</dbReference>
<dbReference type="GO" id="GO:0005524">
    <property type="term" value="F:ATP binding"/>
    <property type="evidence" value="ECO:0007669"/>
    <property type="project" value="UniProtKB-UniRule"/>
</dbReference>
<dbReference type="GO" id="GO:0016887">
    <property type="term" value="F:ATP hydrolysis activity"/>
    <property type="evidence" value="ECO:0007669"/>
    <property type="project" value="RHEA"/>
</dbReference>
<dbReference type="GO" id="GO:0003690">
    <property type="term" value="F:double-stranded DNA binding"/>
    <property type="evidence" value="ECO:0007669"/>
    <property type="project" value="UniProtKB-UniRule"/>
</dbReference>
<dbReference type="GO" id="GO:0000724">
    <property type="term" value="P:double-strand break repair via homologous recombination"/>
    <property type="evidence" value="ECO:0007669"/>
    <property type="project" value="UniProtKB-UniRule"/>
</dbReference>
<dbReference type="FunFam" id="3.40.50.300:FF:001164">
    <property type="entry name" value="ATP-dependent helicase/nuclease subunit A"/>
    <property type="match status" value="1"/>
</dbReference>
<dbReference type="FunFam" id="3.40.50.300:FF:001196">
    <property type="entry name" value="ATP-dependent helicase/nuclease subunit A"/>
    <property type="match status" value="1"/>
</dbReference>
<dbReference type="FunFam" id="3.40.50.300:FF:001236">
    <property type="entry name" value="ATP-dependent helicase/nuclease subunit A"/>
    <property type="match status" value="1"/>
</dbReference>
<dbReference type="Gene3D" id="3.90.320.10">
    <property type="match status" value="1"/>
</dbReference>
<dbReference type="Gene3D" id="3.40.50.300">
    <property type="entry name" value="P-loop containing nucleotide triphosphate hydrolases"/>
    <property type="match status" value="4"/>
</dbReference>
<dbReference type="HAMAP" id="MF_01451">
    <property type="entry name" value="AddA"/>
    <property type="match status" value="1"/>
</dbReference>
<dbReference type="InterPro" id="IPR014152">
    <property type="entry name" value="AddA"/>
</dbReference>
<dbReference type="InterPro" id="IPR014017">
    <property type="entry name" value="DNA_helicase_UvrD-like_C"/>
</dbReference>
<dbReference type="InterPro" id="IPR000212">
    <property type="entry name" value="DNA_helicase_UvrD/REP"/>
</dbReference>
<dbReference type="InterPro" id="IPR027417">
    <property type="entry name" value="P-loop_NTPase"/>
</dbReference>
<dbReference type="InterPro" id="IPR011604">
    <property type="entry name" value="PDDEXK-like_dom_sf"/>
</dbReference>
<dbReference type="InterPro" id="IPR038726">
    <property type="entry name" value="PDDEXK_AddAB-type"/>
</dbReference>
<dbReference type="InterPro" id="IPR011335">
    <property type="entry name" value="Restrct_endonuc-II-like"/>
</dbReference>
<dbReference type="InterPro" id="IPR014016">
    <property type="entry name" value="UvrD-like_ATP-bd"/>
</dbReference>
<dbReference type="NCBIfam" id="TIGR02785">
    <property type="entry name" value="addA_Gpos"/>
    <property type="match status" value="1"/>
</dbReference>
<dbReference type="PANTHER" id="PTHR11070:SF48">
    <property type="entry name" value="ATP-DEPENDENT HELICASE_NUCLEASE SUBUNIT A"/>
    <property type="match status" value="1"/>
</dbReference>
<dbReference type="PANTHER" id="PTHR11070">
    <property type="entry name" value="UVRD / RECB / PCRA DNA HELICASE FAMILY MEMBER"/>
    <property type="match status" value="1"/>
</dbReference>
<dbReference type="Pfam" id="PF12705">
    <property type="entry name" value="PDDEXK_1"/>
    <property type="match status" value="1"/>
</dbReference>
<dbReference type="Pfam" id="PF00580">
    <property type="entry name" value="UvrD-helicase"/>
    <property type="match status" value="1"/>
</dbReference>
<dbReference type="Pfam" id="PF13361">
    <property type="entry name" value="UvrD_C"/>
    <property type="match status" value="1"/>
</dbReference>
<dbReference type="SUPFAM" id="SSF52540">
    <property type="entry name" value="P-loop containing nucleoside triphosphate hydrolases"/>
    <property type="match status" value="1"/>
</dbReference>
<dbReference type="SUPFAM" id="SSF52980">
    <property type="entry name" value="Restriction endonuclease-like"/>
    <property type="match status" value="1"/>
</dbReference>
<dbReference type="PROSITE" id="PS51198">
    <property type="entry name" value="UVRD_HELICASE_ATP_BIND"/>
    <property type="match status" value="1"/>
</dbReference>
<dbReference type="PROSITE" id="PS51217">
    <property type="entry name" value="UVRD_HELICASE_CTER"/>
    <property type="match status" value="1"/>
</dbReference>
<evidence type="ECO:0000255" key="1">
    <source>
        <dbReference type="HAMAP-Rule" id="MF_01451"/>
    </source>
</evidence>
<proteinExistence type="inferred from homology"/>
<reference key="1">
    <citation type="journal article" date="2007" name="PLoS ONE">
        <title>Analysis of the neurotoxin complex genes in Clostridium botulinum A1-A4 and B1 strains: BoNT/A3, /Ba4 and /B1 clusters are located within plasmids.</title>
        <authorList>
            <person name="Smith T.J."/>
            <person name="Hill K.K."/>
            <person name="Foley B.T."/>
            <person name="Detter J.C."/>
            <person name="Munk A.C."/>
            <person name="Bruce D.C."/>
            <person name="Doggett N.A."/>
            <person name="Smith L.A."/>
            <person name="Marks J.D."/>
            <person name="Xie G."/>
            <person name="Brettin T.S."/>
        </authorList>
    </citation>
    <scope>NUCLEOTIDE SEQUENCE [LARGE SCALE GENOMIC DNA]</scope>
    <source>
        <strain>ATCC 19397 / Type A</strain>
    </source>
</reference>
<comment type="function">
    <text evidence="1">The heterodimer acts as both an ATP-dependent DNA helicase and an ATP-dependent, dual-direction single-stranded exonuclease. Recognizes the chi site generating a DNA molecule suitable for the initiation of homologous recombination. The AddA nuclease domain is required for chi fragment generation; this subunit has the helicase and 3' -&gt; 5' nuclease activities.</text>
</comment>
<comment type="catalytic activity">
    <reaction evidence="1">
        <text>Couples ATP hydrolysis with the unwinding of duplex DNA by translocating in the 3'-5' direction.</text>
        <dbReference type="EC" id="5.6.2.4"/>
    </reaction>
</comment>
<comment type="catalytic activity">
    <reaction evidence="1">
        <text>ATP + H2O = ADP + phosphate + H(+)</text>
        <dbReference type="Rhea" id="RHEA:13065"/>
        <dbReference type="ChEBI" id="CHEBI:15377"/>
        <dbReference type="ChEBI" id="CHEBI:15378"/>
        <dbReference type="ChEBI" id="CHEBI:30616"/>
        <dbReference type="ChEBI" id="CHEBI:43474"/>
        <dbReference type="ChEBI" id="CHEBI:456216"/>
        <dbReference type="EC" id="5.6.2.4"/>
    </reaction>
</comment>
<comment type="cofactor">
    <cofactor evidence="1">
        <name>Mg(2+)</name>
        <dbReference type="ChEBI" id="CHEBI:18420"/>
    </cofactor>
</comment>
<comment type="subunit">
    <text evidence="1">Heterodimer of AddA and AddB/RexB.</text>
</comment>
<comment type="similarity">
    <text evidence="1">Belongs to the helicase family. AddA subfamily.</text>
</comment>
<protein>
    <recommendedName>
        <fullName evidence="1">ATP-dependent helicase/nuclease subunit A</fullName>
        <ecNumber evidence="1">3.1.-.-</ecNumber>
        <ecNumber evidence="1">5.6.2.4</ecNumber>
    </recommendedName>
    <alternativeName>
        <fullName evidence="1">ATP-dependent helicase/nuclease AddA</fullName>
    </alternativeName>
    <alternativeName>
        <fullName evidence="1">DNA 3'-5' helicase AddA</fullName>
    </alternativeName>
</protein>
<name>ADDA_CLOB1</name>